<name>Y005_MYCCT</name>
<feature type="chain" id="PRO_0000066465" description="Uncharacterized protein MCAP_0005">
    <location>
        <begin position="1"/>
        <end position="364"/>
    </location>
</feature>
<feature type="transmembrane region" description="Helical" evidence="1">
    <location>
        <begin position="41"/>
        <end position="61"/>
    </location>
</feature>
<feature type="transmembrane region" description="Helical" evidence="1">
    <location>
        <begin position="298"/>
        <end position="318"/>
    </location>
</feature>
<feature type="transmembrane region" description="Helical" evidence="1">
    <location>
        <begin position="329"/>
        <end position="349"/>
    </location>
</feature>
<keyword id="KW-0472">Membrane</keyword>
<keyword id="KW-0812">Transmembrane</keyword>
<keyword id="KW-1133">Transmembrane helix</keyword>
<accession>P43040</accession>
<accession>Q2STA8</accession>
<comment type="subcellular location">
    <subcellularLocation>
        <location evidence="2">Membrane</location>
        <topology evidence="2">Multi-pass membrane protein</topology>
    </subcellularLocation>
</comment>
<organism>
    <name type="scientific">Mycoplasma capricolum subsp. capricolum (strain California kid / ATCC 27343 / NCTC 10154)</name>
    <dbReference type="NCBI Taxonomy" id="340047"/>
    <lineage>
        <taxon>Bacteria</taxon>
        <taxon>Bacillati</taxon>
        <taxon>Mycoplasmatota</taxon>
        <taxon>Mollicutes</taxon>
        <taxon>Mycoplasmataceae</taxon>
        <taxon>Mycoplasma</taxon>
    </lineage>
</organism>
<dbReference type="EMBL" id="CP000123">
    <property type="protein sequence ID" value="ABC01327.1"/>
    <property type="molecule type" value="Genomic_DNA"/>
</dbReference>
<dbReference type="EMBL" id="D14983">
    <property type="protein sequence ID" value="BAA03625.1"/>
    <property type="molecule type" value="Genomic_DNA"/>
</dbReference>
<dbReference type="PIR" id="S42116">
    <property type="entry name" value="S42116"/>
</dbReference>
<dbReference type="RefSeq" id="WP_011386910.1">
    <property type="nucleotide sequence ID" value="NC_007633.1"/>
</dbReference>
<dbReference type="SMR" id="P43040"/>
<dbReference type="GeneID" id="23779038"/>
<dbReference type="KEGG" id="mcp:MCAP_0005"/>
<dbReference type="HOGENOM" id="CLU_762508_0_0_14"/>
<dbReference type="PhylomeDB" id="P43040"/>
<dbReference type="Proteomes" id="UP000001928">
    <property type="component" value="Chromosome"/>
</dbReference>
<dbReference type="GO" id="GO:0016020">
    <property type="term" value="C:membrane"/>
    <property type="evidence" value="ECO:0007669"/>
    <property type="project" value="UniProtKB-SubCell"/>
</dbReference>
<dbReference type="Gene3D" id="1.10.287.950">
    <property type="entry name" value="Methyl-accepting chemotaxis protein"/>
    <property type="match status" value="1"/>
</dbReference>
<dbReference type="SUPFAM" id="SSF58104">
    <property type="entry name" value="Methyl-accepting chemotaxis protein (MCP) signaling domain"/>
    <property type="match status" value="1"/>
</dbReference>
<proteinExistence type="predicted"/>
<sequence length="364" mass="42519">MISDFNNQEITLEDLEQNNVKLKEGKAKVQFLMRFSLVFSNIFTHIFLFLLIIVSGLFFGLRYTYYNYKIDLITNVYKIKPSIPKLKEIYKEVLEVVDEVKRETDKNSEDSLINKIDEIRGIVKEVTNIAKEFDEKSKEVKPKVEKVIQEGKQVTSNLDKITKEIQALQVNGNGLASRVRRSLTGDINTITNLANNIDFDFNSVKESIEKITGLAQQISKEGKSITKNVEEIKNEVEYFTGKSKEPLKDIDKIKQIYDKKIPIFEKNNKKLQEIWNKLMGIYNEFTVKETKKDYYNYVIYILLFLIIDSLILLVITYMSMISKTIKKLLLFYIFGLLSFNPIVWASIIISLFSRPIKNRKNKFY</sequence>
<reference key="1">
    <citation type="submission" date="2005-09" db="EMBL/GenBank/DDBJ databases">
        <authorList>
            <person name="Glass J.I."/>
            <person name="Lartigue C."/>
            <person name="Pfannkoch C."/>
            <person name="Baden-Tillson H."/>
            <person name="Smith H.O."/>
            <person name="Venter J.C."/>
            <person name="Roske K."/>
            <person name="Wise K.S."/>
            <person name="Calcutt M.J."/>
            <person name="Nelson W.C."/>
            <person name="Nierman W.C."/>
        </authorList>
    </citation>
    <scope>NUCLEOTIDE SEQUENCE [LARGE SCALE GENOMIC DNA]</scope>
    <source>
        <strain>California kid / ATCC 27343 / NCTC 10154</strain>
    </source>
</reference>
<reference key="2">
    <citation type="journal article" date="1993" name="Nucleic Acids Res.">
        <title>Mapping of replication initiation site in Mycoplasma capricolum genome by two-dimensional gel-electrophoretic analysis.</title>
        <authorList>
            <person name="Miyata M."/>
            <person name="Sano K."/>
            <person name="Okada R."/>
            <person name="Fukumura T."/>
        </authorList>
    </citation>
    <scope>NUCLEOTIDE SEQUENCE [GENOMIC DNA] OF 1-71</scope>
</reference>
<gene>
    <name type="ordered locus">MCAP_0005</name>
</gene>
<protein>
    <recommendedName>
        <fullName>Uncharacterized protein MCAP_0005</fullName>
    </recommendedName>
    <alternativeName>
        <fullName>ORF L5</fullName>
    </alternativeName>
</protein>
<evidence type="ECO:0000255" key="1"/>
<evidence type="ECO:0000305" key="2"/>